<dbReference type="EMBL" id="AF041836">
    <property type="protein sequence ID" value="AAD12590.1"/>
    <property type="molecule type" value="Genomic_DNA"/>
</dbReference>
<dbReference type="RefSeq" id="NP_047177.1">
    <property type="nucleotide sequence ID" value="NC_001910.1"/>
</dbReference>
<dbReference type="Proteomes" id="UP000000416">
    <property type="component" value="Plasmid pLeu-Sg"/>
</dbReference>
<dbReference type="GO" id="GO:0006260">
    <property type="term" value="P:DNA replication"/>
    <property type="evidence" value="ECO:0007669"/>
    <property type="project" value="UniProtKB-KW"/>
</dbReference>
<dbReference type="GO" id="GO:0006276">
    <property type="term" value="P:plasmid maintenance"/>
    <property type="evidence" value="ECO:0007669"/>
    <property type="project" value="UniProtKB-KW"/>
</dbReference>
<dbReference type="InterPro" id="IPR003446">
    <property type="entry name" value="Plasmid_replication_init_RepA"/>
</dbReference>
<dbReference type="NCBIfam" id="NF040977">
    <property type="entry name" value="RepA_IncFII_LM"/>
    <property type="match status" value="1"/>
</dbReference>
<dbReference type="Pfam" id="PF02387">
    <property type="entry name" value="IncFII_repA"/>
    <property type="match status" value="1"/>
</dbReference>
<proteinExistence type="inferred from homology"/>
<feature type="chain" id="PRO_0000216228" description="Probable replication-associated protein repA1">
    <location>
        <begin position="1"/>
        <end position="283"/>
    </location>
</feature>
<reference key="1">
    <citation type="journal article" date="1999" name="J. Mol. Evol.">
        <title>Genetic characterization of plasmids containing genes encoding enzymes of leucine biosynthesis in endosymbionts (Buchnera) of aphids.</title>
        <authorList>
            <person name="Baumann L."/>
            <person name="Baumann P."/>
            <person name="Moran N.A."/>
            <person name="Sandstroem J.P."/>
            <person name="Thao M.L."/>
        </authorList>
    </citation>
    <scope>NUCLEOTIDE SEQUENCE [LARGE SCALE GENOMIC DNA]</scope>
    <source>
        <strain>Sg</strain>
    </source>
</reference>
<keyword id="KW-0235">DNA replication</keyword>
<keyword id="KW-0614">Plasmid</keyword>
<keyword id="KW-0615">Plasmid copy control</keyword>
<protein>
    <recommendedName>
        <fullName>Probable replication-associated protein repA1</fullName>
    </recommendedName>
</protein>
<name>REPA1_BUCAP</name>
<sequence length="283" mass="32883">MSSRENYVYNRNPVFTAPKNNKRRPSFICYAMKKASEIDVARCELNYVIQPKNIKTGLPLKRFRRLNEHRACALRAMVSAMLYHFNISSELVQASVEQLSDECGLSTLSKVGNKSITRASRLITNFMEPMGFVTCKKIWDRVLGNYMPKMITLTPLFFMLLDISEKQLINAKKQQLGWINKNLITKGLKPITVIEAKRRAKDIQMRNLFKYRISKHNFYKKRKNAQRLIALDEKEARQKILRALVAKYSISELTTLGPSGLKKQVNISYYYLKKIATNRYPDN</sequence>
<organism>
    <name type="scientific">Buchnera aphidicola subsp. Schizaphis graminum (strain Sg)</name>
    <dbReference type="NCBI Taxonomy" id="198804"/>
    <lineage>
        <taxon>Bacteria</taxon>
        <taxon>Pseudomonadati</taxon>
        <taxon>Pseudomonadota</taxon>
        <taxon>Gammaproteobacteria</taxon>
        <taxon>Enterobacterales</taxon>
        <taxon>Erwiniaceae</taxon>
        <taxon>Buchnera</taxon>
    </lineage>
</organism>
<accession>O85060</accession>
<evidence type="ECO:0000250" key="1"/>
<evidence type="ECO:0000305" key="2"/>
<geneLocation type="plasmid">
    <name>pLeu-Sg</name>
    <name>pBSg1</name>
</geneLocation>
<gene>
    <name type="primary">repA1</name>
    <name type="ordered locus">BUsg_PL1</name>
</gene>
<comment type="function">
    <text evidence="1">This protein is essential for plasmid replication; it is involved in copy control functions.</text>
</comment>
<comment type="similarity">
    <text evidence="2">Belongs to the IncFII RepA family.</text>
</comment>